<proteinExistence type="inferred from homology"/>
<feature type="chain" id="PRO_1000215118" description="Protein translocase subunit SecA">
    <location>
        <begin position="1"/>
        <end position="906"/>
    </location>
</feature>
<feature type="region of interest" description="Disordered" evidence="2">
    <location>
        <begin position="862"/>
        <end position="887"/>
    </location>
</feature>
<feature type="binding site" evidence="1">
    <location>
        <position position="86"/>
    </location>
    <ligand>
        <name>ATP</name>
        <dbReference type="ChEBI" id="CHEBI:30616"/>
    </ligand>
</feature>
<feature type="binding site" evidence="1">
    <location>
        <begin position="104"/>
        <end position="108"/>
    </location>
    <ligand>
        <name>ATP</name>
        <dbReference type="ChEBI" id="CHEBI:30616"/>
    </ligand>
</feature>
<feature type="binding site" evidence="1">
    <location>
        <position position="499"/>
    </location>
    <ligand>
        <name>ATP</name>
        <dbReference type="ChEBI" id="CHEBI:30616"/>
    </ligand>
</feature>
<feature type="binding site" evidence="1">
    <location>
        <position position="890"/>
    </location>
    <ligand>
        <name>Zn(2+)</name>
        <dbReference type="ChEBI" id="CHEBI:29105"/>
    </ligand>
</feature>
<feature type="binding site" evidence="1">
    <location>
        <position position="892"/>
    </location>
    <ligand>
        <name>Zn(2+)</name>
        <dbReference type="ChEBI" id="CHEBI:29105"/>
    </ligand>
</feature>
<feature type="binding site" evidence="1">
    <location>
        <position position="901"/>
    </location>
    <ligand>
        <name>Zn(2+)</name>
        <dbReference type="ChEBI" id="CHEBI:29105"/>
    </ligand>
</feature>
<feature type="binding site" evidence="1">
    <location>
        <position position="902"/>
    </location>
    <ligand>
        <name>Zn(2+)</name>
        <dbReference type="ChEBI" id="CHEBI:29105"/>
    </ligand>
</feature>
<sequence length="906" mass="103431">MLSILKKLFGTANDRTVKKLFSEITKINSLEPAIQKLSDEELKNKTVEFKEKLKNGATLDDIVYEAFAVVREAAKRVCGMRHFDVQLIGGLILHRGMITEMRTGEGKTLVATLPAYLNALTGKGVHVVTVNDYLARRDSASMGKIYNFLGLSVGCIVGGMPDEVKRAAYNADITHATNNELGFDYLRDNMKYSLQERVLRPFNFAIIDEVDSILIDEARTPLVISGPVNDNAELYGKIDKIVRLLNASDFEKDEKLKTINLTETGITHIESLLSKENIIKPDTSLYDFENLTLVHYVNQALRAHNMFTVNVDYLVREGKVMIIDEFTGRVMEGRRYSEGLHQALEAKENVKIQNENQTLASITFQNYFRNYPKLSGMTGTAMTEAPELKDIYNLDVVAVPTHNKVTRLDLDDEIYGSKKEKYDAILKLIRDCYDRGQPMLVGTISIEKSEELSSVLNKEKIPHKVLNAKFHEQEAFIIAQAGRFKAVTIATNMAGRGTDIMLGGNPEMLIEQLDKEHNYEAKIAEIKAQIAEEKKQVIEAGGLFVIGTERHESRRIDNQLRGRSGRQGDPGKTKFFLSLDDDLMRIFASDRISGVLRTLGLKDGEAIHHPMISRSLEKAQQKVEGHNYEMRKNLLRFDDVMNDQRKIIYEQRTEIIKSKDSHGFLNSTTEELAKKIVLTFMPVGSYREDWDIENLSVELHRVFSIKFDHNVVSKNDVTEEEITKTVIQMAHYIYKSKEEAYSSELMHNAMKYILLTTLDQVWKDHLYSLDHLRQGISLRAYGQKDPLSEYKREAFNLFEQMLNNLKELFIQTVYHFHIDLKNVQKEDVSLEYKKLQKNMRESREDPAFSKYNAGSSLETDLKPVVSRIDPKDRNPDDPTSWGRVSRNELCPCGSGKKYKYCHGANE</sequence>
<reference key="1">
    <citation type="journal article" date="2009" name="PLoS ONE">
        <title>Genome sequence of the endosymbiont Rickettsia peacockii and comparison with virulent Rickettsia rickettsii: identification of virulence factors.</title>
        <authorList>
            <person name="Felsheim R.F."/>
            <person name="Kurtti T.J."/>
            <person name="Munderloh U.G."/>
        </authorList>
    </citation>
    <scope>NUCLEOTIDE SEQUENCE [LARGE SCALE GENOMIC DNA]</scope>
    <source>
        <strain>Rustic</strain>
    </source>
</reference>
<organism>
    <name type="scientific">Rickettsia peacockii (strain Rustic)</name>
    <dbReference type="NCBI Taxonomy" id="562019"/>
    <lineage>
        <taxon>Bacteria</taxon>
        <taxon>Pseudomonadati</taxon>
        <taxon>Pseudomonadota</taxon>
        <taxon>Alphaproteobacteria</taxon>
        <taxon>Rickettsiales</taxon>
        <taxon>Rickettsiaceae</taxon>
        <taxon>Rickettsieae</taxon>
        <taxon>Rickettsia</taxon>
        <taxon>spotted fever group</taxon>
    </lineage>
</organism>
<keyword id="KW-0067">ATP-binding</keyword>
<keyword id="KW-0997">Cell inner membrane</keyword>
<keyword id="KW-1003">Cell membrane</keyword>
<keyword id="KW-0963">Cytoplasm</keyword>
<keyword id="KW-0472">Membrane</keyword>
<keyword id="KW-0479">Metal-binding</keyword>
<keyword id="KW-0547">Nucleotide-binding</keyword>
<keyword id="KW-0653">Protein transport</keyword>
<keyword id="KW-1278">Translocase</keyword>
<keyword id="KW-0811">Translocation</keyword>
<keyword id="KW-0813">Transport</keyword>
<keyword id="KW-0862">Zinc</keyword>
<accession>C4K1J0</accession>
<name>SECA_RICPU</name>
<comment type="function">
    <text evidence="1">Part of the Sec protein translocase complex. Interacts with the SecYEG preprotein conducting channel. Has a central role in coupling the hydrolysis of ATP to the transfer of proteins into and across the cell membrane, serving both as a receptor for the preprotein-SecB complex and as an ATP-driven molecular motor driving the stepwise translocation of polypeptide chains across the membrane.</text>
</comment>
<comment type="catalytic activity">
    <reaction evidence="1">
        <text>ATP + H2O + cellular proteinSide 1 = ADP + phosphate + cellular proteinSide 2.</text>
        <dbReference type="EC" id="7.4.2.8"/>
    </reaction>
</comment>
<comment type="cofactor">
    <cofactor evidence="1">
        <name>Zn(2+)</name>
        <dbReference type="ChEBI" id="CHEBI:29105"/>
    </cofactor>
    <text evidence="1">May bind 1 zinc ion per subunit.</text>
</comment>
<comment type="subunit">
    <text evidence="1">Monomer and homodimer. Part of the essential Sec protein translocation apparatus which comprises SecA, SecYEG and auxiliary proteins SecDF-YajC and YidC.</text>
</comment>
<comment type="subcellular location">
    <subcellularLocation>
        <location evidence="1">Cell inner membrane</location>
        <topology evidence="1">Peripheral membrane protein</topology>
        <orientation evidence="1">Cytoplasmic side</orientation>
    </subcellularLocation>
    <subcellularLocation>
        <location evidence="1">Cytoplasm</location>
    </subcellularLocation>
    <text evidence="1">Distribution is 50-50.</text>
</comment>
<comment type="similarity">
    <text evidence="1">Belongs to the SecA family.</text>
</comment>
<evidence type="ECO:0000255" key="1">
    <source>
        <dbReference type="HAMAP-Rule" id="MF_01382"/>
    </source>
</evidence>
<evidence type="ECO:0000256" key="2">
    <source>
        <dbReference type="SAM" id="MobiDB-lite"/>
    </source>
</evidence>
<dbReference type="EC" id="7.4.2.8" evidence="1"/>
<dbReference type="EMBL" id="CP001227">
    <property type="protein sequence ID" value="ACR47441.1"/>
    <property type="molecule type" value="Genomic_DNA"/>
</dbReference>
<dbReference type="RefSeq" id="WP_012736682.1">
    <property type="nucleotide sequence ID" value="NC_012730.1"/>
</dbReference>
<dbReference type="SMR" id="C4K1J0"/>
<dbReference type="KEGG" id="rpk:RPR_03495"/>
<dbReference type="HOGENOM" id="CLU_005314_3_0_5"/>
<dbReference type="Proteomes" id="UP000005015">
    <property type="component" value="Chromosome"/>
</dbReference>
<dbReference type="GO" id="GO:0031522">
    <property type="term" value="C:cell envelope Sec protein transport complex"/>
    <property type="evidence" value="ECO:0007669"/>
    <property type="project" value="TreeGrafter"/>
</dbReference>
<dbReference type="GO" id="GO:0005829">
    <property type="term" value="C:cytosol"/>
    <property type="evidence" value="ECO:0007669"/>
    <property type="project" value="TreeGrafter"/>
</dbReference>
<dbReference type="GO" id="GO:0005886">
    <property type="term" value="C:plasma membrane"/>
    <property type="evidence" value="ECO:0007669"/>
    <property type="project" value="UniProtKB-SubCell"/>
</dbReference>
<dbReference type="GO" id="GO:0005524">
    <property type="term" value="F:ATP binding"/>
    <property type="evidence" value="ECO:0007669"/>
    <property type="project" value="UniProtKB-UniRule"/>
</dbReference>
<dbReference type="GO" id="GO:0046872">
    <property type="term" value="F:metal ion binding"/>
    <property type="evidence" value="ECO:0007669"/>
    <property type="project" value="UniProtKB-KW"/>
</dbReference>
<dbReference type="GO" id="GO:0008564">
    <property type="term" value="F:protein-exporting ATPase activity"/>
    <property type="evidence" value="ECO:0007669"/>
    <property type="project" value="UniProtKB-EC"/>
</dbReference>
<dbReference type="GO" id="GO:0065002">
    <property type="term" value="P:intracellular protein transmembrane transport"/>
    <property type="evidence" value="ECO:0007669"/>
    <property type="project" value="UniProtKB-UniRule"/>
</dbReference>
<dbReference type="GO" id="GO:0017038">
    <property type="term" value="P:protein import"/>
    <property type="evidence" value="ECO:0007669"/>
    <property type="project" value="InterPro"/>
</dbReference>
<dbReference type="GO" id="GO:0006605">
    <property type="term" value="P:protein targeting"/>
    <property type="evidence" value="ECO:0007669"/>
    <property type="project" value="UniProtKB-UniRule"/>
</dbReference>
<dbReference type="GO" id="GO:0043952">
    <property type="term" value="P:protein transport by the Sec complex"/>
    <property type="evidence" value="ECO:0007669"/>
    <property type="project" value="TreeGrafter"/>
</dbReference>
<dbReference type="CDD" id="cd17928">
    <property type="entry name" value="DEXDc_SecA"/>
    <property type="match status" value="1"/>
</dbReference>
<dbReference type="CDD" id="cd18803">
    <property type="entry name" value="SF2_C_secA"/>
    <property type="match status" value="1"/>
</dbReference>
<dbReference type="FunFam" id="3.40.50.300:FF:000113">
    <property type="entry name" value="Preprotein translocase subunit SecA"/>
    <property type="match status" value="1"/>
</dbReference>
<dbReference type="FunFam" id="3.90.1440.10:FF:000001">
    <property type="entry name" value="Preprotein translocase subunit SecA"/>
    <property type="match status" value="1"/>
</dbReference>
<dbReference type="FunFam" id="1.10.3060.10:FF:000003">
    <property type="entry name" value="Protein translocase subunit SecA"/>
    <property type="match status" value="1"/>
</dbReference>
<dbReference type="FunFam" id="3.40.50.300:FF:000334">
    <property type="entry name" value="Protein translocase subunit SecA"/>
    <property type="match status" value="1"/>
</dbReference>
<dbReference type="Gene3D" id="1.10.3060.10">
    <property type="entry name" value="Helical scaffold and wing domains of SecA"/>
    <property type="match status" value="1"/>
</dbReference>
<dbReference type="Gene3D" id="3.40.50.300">
    <property type="entry name" value="P-loop containing nucleotide triphosphate hydrolases"/>
    <property type="match status" value="2"/>
</dbReference>
<dbReference type="Gene3D" id="3.90.1440.10">
    <property type="entry name" value="SecA, preprotein cross-linking domain"/>
    <property type="match status" value="1"/>
</dbReference>
<dbReference type="HAMAP" id="MF_01382">
    <property type="entry name" value="SecA"/>
    <property type="match status" value="1"/>
</dbReference>
<dbReference type="InterPro" id="IPR014001">
    <property type="entry name" value="Helicase_ATP-bd"/>
</dbReference>
<dbReference type="InterPro" id="IPR027417">
    <property type="entry name" value="P-loop_NTPase"/>
</dbReference>
<dbReference type="InterPro" id="IPR004027">
    <property type="entry name" value="SEC_C_motif"/>
</dbReference>
<dbReference type="InterPro" id="IPR000185">
    <property type="entry name" value="SecA"/>
</dbReference>
<dbReference type="InterPro" id="IPR020937">
    <property type="entry name" value="SecA_CS"/>
</dbReference>
<dbReference type="InterPro" id="IPR011115">
    <property type="entry name" value="SecA_DEAD"/>
</dbReference>
<dbReference type="InterPro" id="IPR014018">
    <property type="entry name" value="SecA_motor_DEAD"/>
</dbReference>
<dbReference type="InterPro" id="IPR011130">
    <property type="entry name" value="SecA_preprotein_X-link_dom"/>
</dbReference>
<dbReference type="InterPro" id="IPR044722">
    <property type="entry name" value="SecA_SF2_C"/>
</dbReference>
<dbReference type="InterPro" id="IPR011116">
    <property type="entry name" value="SecA_Wing/Scaffold"/>
</dbReference>
<dbReference type="InterPro" id="IPR036266">
    <property type="entry name" value="SecA_Wing/Scaffold_sf"/>
</dbReference>
<dbReference type="InterPro" id="IPR036670">
    <property type="entry name" value="SecA_X-link_sf"/>
</dbReference>
<dbReference type="NCBIfam" id="NF009538">
    <property type="entry name" value="PRK12904.1"/>
    <property type="match status" value="1"/>
</dbReference>
<dbReference type="NCBIfam" id="TIGR00963">
    <property type="entry name" value="secA"/>
    <property type="match status" value="1"/>
</dbReference>
<dbReference type="PANTHER" id="PTHR30612:SF0">
    <property type="entry name" value="CHLOROPLAST PROTEIN-TRANSPORTING ATPASE"/>
    <property type="match status" value="1"/>
</dbReference>
<dbReference type="PANTHER" id="PTHR30612">
    <property type="entry name" value="SECA INNER MEMBRANE COMPONENT OF SEC PROTEIN SECRETION SYSTEM"/>
    <property type="match status" value="1"/>
</dbReference>
<dbReference type="Pfam" id="PF21090">
    <property type="entry name" value="P-loop_SecA"/>
    <property type="match status" value="1"/>
</dbReference>
<dbReference type="Pfam" id="PF02810">
    <property type="entry name" value="SEC-C"/>
    <property type="match status" value="1"/>
</dbReference>
<dbReference type="Pfam" id="PF07517">
    <property type="entry name" value="SecA_DEAD"/>
    <property type="match status" value="1"/>
</dbReference>
<dbReference type="Pfam" id="PF01043">
    <property type="entry name" value="SecA_PP_bind"/>
    <property type="match status" value="1"/>
</dbReference>
<dbReference type="Pfam" id="PF07516">
    <property type="entry name" value="SecA_SW"/>
    <property type="match status" value="1"/>
</dbReference>
<dbReference type="PRINTS" id="PR00906">
    <property type="entry name" value="SECA"/>
</dbReference>
<dbReference type="SMART" id="SM00957">
    <property type="entry name" value="SecA_DEAD"/>
    <property type="match status" value="1"/>
</dbReference>
<dbReference type="SMART" id="SM00958">
    <property type="entry name" value="SecA_PP_bind"/>
    <property type="match status" value="1"/>
</dbReference>
<dbReference type="SUPFAM" id="SSF81886">
    <property type="entry name" value="Helical scaffold and wing domains of SecA"/>
    <property type="match status" value="1"/>
</dbReference>
<dbReference type="SUPFAM" id="SSF52540">
    <property type="entry name" value="P-loop containing nucleoside triphosphate hydrolases"/>
    <property type="match status" value="2"/>
</dbReference>
<dbReference type="SUPFAM" id="SSF81767">
    <property type="entry name" value="Pre-protein crosslinking domain of SecA"/>
    <property type="match status" value="1"/>
</dbReference>
<dbReference type="PROSITE" id="PS01312">
    <property type="entry name" value="SECA"/>
    <property type="match status" value="1"/>
</dbReference>
<dbReference type="PROSITE" id="PS51196">
    <property type="entry name" value="SECA_MOTOR_DEAD"/>
    <property type="match status" value="1"/>
</dbReference>
<gene>
    <name evidence="1" type="primary">secA</name>
    <name type="ordered locus">RPR_03495</name>
</gene>
<protein>
    <recommendedName>
        <fullName evidence="1">Protein translocase subunit SecA</fullName>
        <ecNumber evidence="1">7.4.2.8</ecNumber>
    </recommendedName>
</protein>